<sequence length="464" mass="53672">MAHVRHFRTLLSGFYFWEAALLLSLVATKETNSARSRSAPMSPSDFLDKLMGRTSGYDARIRPNFKGPPVNVTCNIFINSFGSIAETTMDYRVNIFLRQKWNDPRLAYSEYPDDSLDLDPSMLDSIWKPDLFFANEKGANFHEVTTDNKLLRIFKNGNVLYSIRLTLTLSCPMDLKNFPMDVQTCIMQLESFGYTMNDLIFEWQDEAPVQVAEGLTLPQFLLKEEKDLRYCTKHYNTGKFTCIEVRFHLERQMGYYLIQMYIPSLLIVILSWVSFWINMDAAPARVALGITTVLTMTTQSSGSRASLPKVSYVKAIDIWMAVCLLFVFSALLEYAAVNFVSRQHKELLRFRRKRKNKTEAFALEKFYRFSDTDDEVRESRLSFTAYGMGPCLQAKDGVVPKGPNHAVQVMPKSADEMRKVFIDRAKKIDTISRACFPLAFLIFNIFYWVIYKILRHEDIHHQQD</sequence>
<feature type="signal peptide" evidence="5">
    <location>
        <begin position="1"/>
        <end position="33"/>
    </location>
</feature>
<feature type="chain" id="PRO_0000000421" description="Glycine receptor subunit alpha-3">
    <location>
        <begin position="34"/>
        <end position="464"/>
    </location>
</feature>
<feature type="topological domain" description="Extracellular" evidence="2">
    <location>
        <begin position="34"/>
        <end position="255"/>
    </location>
</feature>
<feature type="transmembrane region" description="Helical; Name=1" evidence="2">
    <location>
        <begin position="256"/>
        <end position="277"/>
    </location>
</feature>
<feature type="topological domain" description="Cytoplasmic" evidence="2">
    <location>
        <begin position="278"/>
        <end position="282"/>
    </location>
</feature>
<feature type="transmembrane region" description="Helical; Name=2" evidence="2">
    <location>
        <begin position="283"/>
        <end position="303"/>
    </location>
</feature>
<feature type="topological domain" description="Extracellular" evidence="2">
    <location>
        <begin position="304"/>
        <end position="314"/>
    </location>
</feature>
<feature type="transmembrane region" description="Helical; Name=3" evidence="2">
    <location>
        <begin position="315"/>
        <end position="335"/>
    </location>
</feature>
<feature type="topological domain" description="Cytoplasmic" evidence="2">
    <location>
        <begin position="336"/>
        <end position="430"/>
    </location>
</feature>
<feature type="transmembrane region" description="Helical; Name=4" evidence="2">
    <location>
        <begin position="431"/>
        <end position="451"/>
    </location>
</feature>
<feature type="topological domain" description="Extracellular" evidence="2">
    <location>
        <begin position="452"/>
        <end position="464"/>
    </location>
</feature>
<feature type="binding site" evidence="3">
    <location>
        <position position="225"/>
    </location>
    <ligand>
        <name>Zn(2+)</name>
        <dbReference type="ChEBI" id="CHEBI:29105"/>
    </ligand>
</feature>
<feature type="binding site" evidence="3">
    <location>
        <position position="227"/>
    </location>
    <ligand>
        <name>Zn(2+)</name>
        <dbReference type="ChEBI" id="CHEBI:29105"/>
    </ligand>
</feature>
<feature type="binding site" evidence="2">
    <location>
        <begin position="235"/>
        <end position="240"/>
    </location>
    <ligand>
        <name>strychnine</name>
        <dbReference type="ChEBI" id="CHEBI:90700"/>
    </ligand>
</feature>
<feature type="binding site" evidence="3">
    <location>
        <position position="248"/>
    </location>
    <ligand>
        <name>Zn(2+)</name>
        <dbReference type="ChEBI" id="CHEBI:29105"/>
    </ligand>
</feature>
<feature type="site" description="Important for obstruction of the ion pore in the closed conformation" evidence="2">
    <location>
        <position position="294"/>
    </location>
</feature>
<feature type="modified residue" description="Phosphoserine" evidence="4">
    <location>
        <position position="370"/>
    </location>
</feature>
<feature type="modified residue" description="Phosphoserine; by PKA" evidence="13 15">
    <location>
        <position position="379"/>
    </location>
</feature>
<feature type="glycosylation site" description="N-linked (GlcNAc...) asparagine" evidence="5">
    <location>
        <position position="71"/>
    </location>
</feature>
<feature type="disulfide bond" evidence="2">
    <location>
        <begin position="171"/>
        <end position="185"/>
    </location>
</feature>
<feature type="disulfide bond" evidence="2">
    <location>
        <begin position="231"/>
        <end position="242"/>
    </location>
</feature>
<feature type="mutagenesis site" description="Strongly enhances glycine sensitivity so that the channel starts to be activated at 0.001 mM glycine." evidence="10">
    <original>P</original>
    <variation>L</variation>
    <location>
        <position position="218"/>
    </location>
</feature>
<feature type="mutagenesis site" description="Loss of a predicted PKA phosphorylation site. Nearly abolishes down-regulation of inhibitory postsynaptic currents by prostaglandin E2." evidence="6">
    <original>S</original>
    <variation>A</variation>
    <location>
        <position position="379"/>
    </location>
</feature>
<feature type="mutagenesis site" description="Phosphomimetic mutant that triggers a local conformation change." evidence="9">
    <original>S</original>
    <variation>E</variation>
    <location>
        <position position="379"/>
    </location>
</feature>
<feature type="mutagenesis site" description="Loss of a predicted PKA phosphorylation site. Abolishes the conformation change observed after treatment with forskolin." evidence="9">
    <original>S</original>
    <variation>G</variation>
    <location>
        <position position="379"/>
    </location>
</feature>
<dbReference type="EMBL" id="M55250">
    <property type="protein sequence ID" value="AAA63492.1"/>
    <property type="molecule type" value="mRNA"/>
</dbReference>
<dbReference type="PIR" id="A23682">
    <property type="entry name" value="A23682"/>
</dbReference>
<dbReference type="SMR" id="P24524"/>
<dbReference type="FunCoup" id="P24524">
    <property type="interactions" value="46"/>
</dbReference>
<dbReference type="STRING" id="10116.ENSRNOP00000069714"/>
<dbReference type="ChEMBL" id="CHEMBL3392921"/>
<dbReference type="GlyCosmos" id="P24524">
    <property type="glycosylation" value="1 site, No reported glycans"/>
</dbReference>
<dbReference type="GlyGen" id="P24524">
    <property type="glycosylation" value="1 site"/>
</dbReference>
<dbReference type="iPTMnet" id="P24524"/>
<dbReference type="PhosphoSitePlus" id="P24524"/>
<dbReference type="PaxDb" id="10116-ENSRNOP00000067536"/>
<dbReference type="ABCD" id="P24524">
    <property type="antibodies" value="1 sequenced antibody"/>
</dbReference>
<dbReference type="AGR" id="RGD:621229"/>
<dbReference type="RGD" id="621229">
    <property type="gene designation" value="Glra3"/>
</dbReference>
<dbReference type="eggNOG" id="KOG3644">
    <property type="taxonomic scope" value="Eukaryota"/>
</dbReference>
<dbReference type="InParanoid" id="P24524"/>
<dbReference type="Reactome" id="R-RNO-112314">
    <property type="pathway name" value="Neurotransmitter receptors and postsynaptic signal transmission"/>
</dbReference>
<dbReference type="PRO" id="PR:P24524"/>
<dbReference type="Proteomes" id="UP000002494">
    <property type="component" value="Unplaced"/>
</dbReference>
<dbReference type="GO" id="GO:0030425">
    <property type="term" value="C:dendrite"/>
    <property type="evidence" value="ECO:0007669"/>
    <property type="project" value="UniProtKB-SubCell"/>
</dbReference>
<dbReference type="GO" id="GO:0016935">
    <property type="term" value="C:glycine-gated chloride channel complex"/>
    <property type="evidence" value="ECO:0000250"/>
    <property type="project" value="UniProtKB"/>
</dbReference>
<dbReference type="GO" id="GO:0098690">
    <property type="term" value="C:glycinergic synapse"/>
    <property type="evidence" value="ECO:0000314"/>
    <property type="project" value="SynGO"/>
</dbReference>
<dbReference type="GO" id="GO:0043204">
    <property type="term" value="C:perikaryon"/>
    <property type="evidence" value="ECO:0007669"/>
    <property type="project" value="UniProtKB-SubCell"/>
</dbReference>
<dbReference type="GO" id="GO:0005886">
    <property type="term" value="C:plasma membrane"/>
    <property type="evidence" value="ECO:0000314"/>
    <property type="project" value="UniProtKB"/>
</dbReference>
<dbReference type="GO" id="GO:0099634">
    <property type="term" value="C:postsynaptic specialization membrane"/>
    <property type="evidence" value="ECO:0000314"/>
    <property type="project" value="SynGO"/>
</dbReference>
<dbReference type="GO" id="GO:0042734">
    <property type="term" value="C:presynaptic membrane"/>
    <property type="evidence" value="ECO:0000266"/>
    <property type="project" value="RGD"/>
</dbReference>
<dbReference type="GO" id="GO:0016934">
    <property type="term" value="F:extracellularly glycine-gated chloride channel activity"/>
    <property type="evidence" value="ECO:0000314"/>
    <property type="project" value="UniProtKB"/>
</dbReference>
<dbReference type="GO" id="GO:0016594">
    <property type="term" value="F:glycine binding"/>
    <property type="evidence" value="ECO:0007669"/>
    <property type="project" value="InterPro"/>
</dbReference>
<dbReference type="GO" id="GO:0022852">
    <property type="term" value="F:glycine-gated chloride ion channel activity"/>
    <property type="evidence" value="ECO:0000250"/>
    <property type="project" value="UniProtKB"/>
</dbReference>
<dbReference type="GO" id="GO:0046872">
    <property type="term" value="F:metal ion binding"/>
    <property type="evidence" value="ECO:0007669"/>
    <property type="project" value="UniProtKB-KW"/>
</dbReference>
<dbReference type="GO" id="GO:0004888">
    <property type="term" value="F:transmembrane signaling receptor activity"/>
    <property type="evidence" value="ECO:0007669"/>
    <property type="project" value="InterPro"/>
</dbReference>
<dbReference type="GO" id="GO:0071230">
    <property type="term" value="P:cellular response to amino acid stimulus"/>
    <property type="evidence" value="ECO:0000314"/>
    <property type="project" value="UniProtKB"/>
</dbReference>
<dbReference type="GO" id="GO:0071361">
    <property type="term" value="P:cellular response to ethanol"/>
    <property type="evidence" value="ECO:0000314"/>
    <property type="project" value="UniProtKB"/>
</dbReference>
<dbReference type="GO" id="GO:0071294">
    <property type="term" value="P:cellular response to zinc ion"/>
    <property type="evidence" value="ECO:0000314"/>
    <property type="project" value="UniProtKB"/>
</dbReference>
<dbReference type="GO" id="GO:1902476">
    <property type="term" value="P:chloride transmembrane transport"/>
    <property type="evidence" value="ECO:0000314"/>
    <property type="project" value="UniProtKB"/>
</dbReference>
<dbReference type="GO" id="GO:0099171">
    <property type="term" value="P:presynaptic modulation of chemical synaptic transmission"/>
    <property type="evidence" value="ECO:0000266"/>
    <property type="project" value="RGD"/>
</dbReference>
<dbReference type="GO" id="GO:0051260">
    <property type="term" value="P:protein homooligomerization"/>
    <property type="evidence" value="ECO:0000266"/>
    <property type="project" value="RGD"/>
</dbReference>
<dbReference type="CDD" id="cd19009">
    <property type="entry name" value="LGIC_ECD_GlyR_alpha"/>
    <property type="match status" value="1"/>
</dbReference>
<dbReference type="CDD" id="cd19060">
    <property type="entry name" value="LGIC_TM_GlyR_alpha"/>
    <property type="match status" value="1"/>
</dbReference>
<dbReference type="FunFam" id="2.70.170.10:FF:000002">
    <property type="entry name" value="Glycine receptor alpha 1 subunit"/>
    <property type="match status" value="1"/>
</dbReference>
<dbReference type="FunFam" id="1.20.58.390:FF:000003">
    <property type="entry name" value="Glycine receptor alpha 2 subunit"/>
    <property type="match status" value="1"/>
</dbReference>
<dbReference type="Gene3D" id="2.70.170.10">
    <property type="entry name" value="Neurotransmitter-gated ion-channel ligand-binding domain"/>
    <property type="match status" value="1"/>
</dbReference>
<dbReference type="Gene3D" id="1.20.58.390">
    <property type="entry name" value="Neurotransmitter-gated ion-channel transmembrane domain"/>
    <property type="match status" value="1"/>
</dbReference>
<dbReference type="InterPro" id="IPR006028">
    <property type="entry name" value="GABAA/Glycine_rcpt"/>
</dbReference>
<dbReference type="InterPro" id="IPR008127">
    <property type="entry name" value="Glycine_rcpt_A"/>
</dbReference>
<dbReference type="InterPro" id="IPR008130">
    <property type="entry name" value="Glycine_rcpt_A3"/>
</dbReference>
<dbReference type="InterPro" id="IPR006202">
    <property type="entry name" value="Neur_chan_lig-bd"/>
</dbReference>
<dbReference type="InterPro" id="IPR036734">
    <property type="entry name" value="Neur_chan_lig-bd_sf"/>
</dbReference>
<dbReference type="InterPro" id="IPR006201">
    <property type="entry name" value="Neur_channel"/>
</dbReference>
<dbReference type="InterPro" id="IPR036719">
    <property type="entry name" value="Neuro-gated_channel_TM_sf"/>
</dbReference>
<dbReference type="InterPro" id="IPR038050">
    <property type="entry name" value="Neuro_actylchol_rec"/>
</dbReference>
<dbReference type="InterPro" id="IPR006029">
    <property type="entry name" value="Neurotrans-gated_channel_TM"/>
</dbReference>
<dbReference type="InterPro" id="IPR018000">
    <property type="entry name" value="Neurotransmitter_ion_chnl_CS"/>
</dbReference>
<dbReference type="NCBIfam" id="TIGR00860">
    <property type="entry name" value="LIC"/>
    <property type="match status" value="1"/>
</dbReference>
<dbReference type="PANTHER" id="PTHR18945">
    <property type="entry name" value="NEUROTRANSMITTER GATED ION CHANNEL"/>
    <property type="match status" value="1"/>
</dbReference>
<dbReference type="Pfam" id="PF02931">
    <property type="entry name" value="Neur_chan_LBD"/>
    <property type="match status" value="1"/>
</dbReference>
<dbReference type="Pfam" id="PF02932">
    <property type="entry name" value="Neur_chan_memb"/>
    <property type="match status" value="1"/>
</dbReference>
<dbReference type="PRINTS" id="PR00253">
    <property type="entry name" value="GABAARECEPTR"/>
</dbReference>
<dbReference type="PRINTS" id="PR01673">
    <property type="entry name" value="GLYRALPHA"/>
</dbReference>
<dbReference type="PRINTS" id="PR01676">
    <property type="entry name" value="GLYRALPHA3"/>
</dbReference>
<dbReference type="PRINTS" id="PR00252">
    <property type="entry name" value="NRIONCHANNEL"/>
</dbReference>
<dbReference type="SUPFAM" id="SSF90112">
    <property type="entry name" value="Neurotransmitter-gated ion-channel transmembrane pore"/>
    <property type="match status" value="1"/>
</dbReference>
<dbReference type="SUPFAM" id="SSF63712">
    <property type="entry name" value="Nicotinic receptor ligand binding domain-like"/>
    <property type="match status" value="1"/>
</dbReference>
<dbReference type="PROSITE" id="PS00236">
    <property type="entry name" value="NEUROTR_ION_CHANNEL"/>
    <property type="match status" value="1"/>
</dbReference>
<evidence type="ECO:0000250" key="1"/>
<evidence type="ECO:0000250" key="2">
    <source>
        <dbReference type="UniProtKB" id="O75311"/>
    </source>
</evidence>
<evidence type="ECO:0000250" key="3">
    <source>
        <dbReference type="UniProtKB" id="P23415"/>
    </source>
</evidence>
<evidence type="ECO:0000250" key="4">
    <source>
        <dbReference type="UniProtKB" id="Q91XP5"/>
    </source>
</evidence>
<evidence type="ECO:0000255" key="5"/>
<evidence type="ECO:0000269" key="6">
    <source>
    </source>
</evidence>
<evidence type="ECO:0000269" key="7">
    <source>
    </source>
</evidence>
<evidence type="ECO:0000269" key="8">
    <source>
    </source>
</evidence>
<evidence type="ECO:0000269" key="9">
    <source>
    </source>
</evidence>
<evidence type="ECO:0000269" key="10">
    <source>
    </source>
</evidence>
<evidence type="ECO:0000269" key="11">
    <source>
    </source>
</evidence>
<evidence type="ECO:0000305" key="12"/>
<evidence type="ECO:0000305" key="13">
    <source>
    </source>
</evidence>
<evidence type="ECO:0000305" key="14">
    <source>
    </source>
</evidence>
<evidence type="ECO:0000305" key="15">
    <source>
    </source>
</evidence>
<accession>P24524</accession>
<name>GLRA3_RAT</name>
<reference key="1">
    <citation type="journal article" date="1990" name="J. Biol. Chem.">
        <title>Identification and functional expression of a novel ligand binding subunit of the inhibitory glycine receptor.</title>
        <authorList>
            <person name="Kuhse J."/>
            <person name="Schmieden V."/>
            <person name="Betz H."/>
        </authorList>
    </citation>
    <scope>NUCLEOTIDE SEQUENCE [MRNA]</scope>
    <source>
        <tissue>Brain</tissue>
    </source>
</reference>
<reference key="2">
    <citation type="journal article" date="2004" name="Science">
        <title>GlyR alpha3: an essential target for spinal PGE2-mediated inflammatory pain sensitization.</title>
        <authorList>
            <person name="Harvey R.J."/>
            <person name="Depner U.B."/>
            <person name="Waessle H."/>
            <person name="Ahmadi S."/>
            <person name="Heindl C."/>
            <person name="Reinold H."/>
            <person name="Smart T.G."/>
            <person name="Harvey K."/>
            <person name="Schuetz B."/>
            <person name="Abo-Salem O.M."/>
            <person name="Zimmer A."/>
            <person name="Poisbeau P."/>
            <person name="Welzl H."/>
            <person name="Wolfer D.P."/>
            <person name="Betz H."/>
            <person name="Zeilhofer H.U."/>
            <person name="Mueller U."/>
        </authorList>
    </citation>
    <scope>FUNCTION</scope>
    <scope>TRANSPORTER ACTIVITY</scope>
    <scope>SUBCELLULAR LOCATION</scope>
    <scope>PHOSPHORYLATION AT SER-379</scope>
    <scope>MUTAGENESIS OF SER-379</scope>
</reference>
<reference key="3">
    <citation type="journal article" date="2009" name="Eur. J. Neurosci.">
        <title>Splice-specific roles of glycine receptor alpha3 in the hippocampus.</title>
        <authorList>
            <person name="Eichler S.A."/>
            <person name="Foerstera B."/>
            <person name="Smolinsky B."/>
            <person name="Juettner R."/>
            <person name="Lehmann T.N."/>
            <person name="Faehling M."/>
            <person name="Schwarz G."/>
            <person name="Legendre P."/>
            <person name="Meier J.C."/>
        </authorList>
    </citation>
    <scope>SUBCELLULAR LOCATION</scope>
    <scope>TISSUE SPECIFICITY</scope>
</reference>
<reference key="4">
    <citation type="journal article" date="2013" name="ACS Chem. Neurosci.">
        <title>Phosphorylation of alpha3 glycine receptors induces a conformational change in the glycine-binding site.</title>
        <authorList>
            <person name="Han L."/>
            <person name="Talwar S."/>
            <person name="Wang Q."/>
            <person name="Shan Q."/>
            <person name="Lynch J.W."/>
        </authorList>
    </citation>
    <scope>FUNCTION</scope>
    <scope>TRANSPORTER ACTIVITY</scope>
    <scope>SUBCELLULAR LOCATION</scope>
    <scope>ACTIVITY REGULATION</scope>
    <scope>PHOSPHORYLATION AT SER-379</scope>
    <scope>MUTAGENESIS OF SER-379</scope>
</reference>
<reference key="5">
    <citation type="journal article" date="2013" name="Alcohol. Clin. Exp. Res.">
        <title>Zinc-dependent modulation of alpha2- and alpha3-glycine receptor subunits by ethanol.</title>
        <authorList>
            <person name="McCracken L.M."/>
            <person name="Trudell J.R."/>
            <person name="McCracken M.L."/>
            <person name="Harris R.A."/>
        </authorList>
    </citation>
    <scope>FUNCTION</scope>
    <scope>TRANSPORTER ACTIVITY</scope>
    <scope>SUBCELLULAR LOCATION</scope>
    <scope>ACTIVITY REGULATION</scope>
    <scope>BIOPHYSICOCHEMICAL PROPERTIES</scope>
    <scope>MUTAGENESIS OF PRO-218</scope>
</reference>
<reference key="6">
    <citation type="journal article" date="2013" name="J. Physiol. (Lond.)">
        <title>The kinetic properties of the alpha3 rat glycine receptor make it suitable for mediating fast synaptic inhibition.</title>
        <authorList>
            <person name="Marabelli A."/>
            <person name="Moroni M."/>
            <person name="Lape R."/>
            <person name="Sivilotti L.G."/>
        </authorList>
    </citation>
    <scope>FUNCTION</scope>
    <scope>TRANSPORTER ACTIVITY</scope>
    <scope>SUBCELLULAR LOCATION</scope>
</reference>
<reference key="7">
    <citation type="journal article" date="2015" name="Neuropharmacology">
        <title>Functional reconstitution of glycinergic synapses incorporating defined glycine receptor subunit combinations.</title>
        <authorList>
            <person name="Zhang Y."/>
            <person name="Dixon C.L."/>
            <person name="Keramidas A."/>
            <person name="Lynch J.W."/>
        </authorList>
    </citation>
    <scope>FUNCTION</scope>
    <scope>TRANSPORTER ACTIVITY</scope>
    <scope>SUBCELLULAR LOCATION</scope>
    <scope>SUBUNIT</scope>
</reference>
<organism>
    <name type="scientific">Rattus norvegicus</name>
    <name type="common">Rat</name>
    <dbReference type="NCBI Taxonomy" id="10116"/>
    <lineage>
        <taxon>Eukaryota</taxon>
        <taxon>Metazoa</taxon>
        <taxon>Chordata</taxon>
        <taxon>Craniata</taxon>
        <taxon>Vertebrata</taxon>
        <taxon>Euteleostomi</taxon>
        <taxon>Mammalia</taxon>
        <taxon>Eutheria</taxon>
        <taxon>Euarchontoglires</taxon>
        <taxon>Glires</taxon>
        <taxon>Rodentia</taxon>
        <taxon>Myomorpha</taxon>
        <taxon>Muroidea</taxon>
        <taxon>Muridae</taxon>
        <taxon>Murinae</taxon>
        <taxon>Rattus</taxon>
    </lineage>
</organism>
<keyword id="KW-1003">Cell membrane</keyword>
<keyword id="KW-0966">Cell projection</keyword>
<keyword id="KW-0868">Chloride</keyword>
<keyword id="KW-0869">Chloride channel</keyword>
<keyword id="KW-1015">Disulfide bond</keyword>
<keyword id="KW-0325">Glycoprotein</keyword>
<keyword id="KW-0407">Ion channel</keyword>
<keyword id="KW-0406">Ion transport</keyword>
<keyword id="KW-1071">Ligand-gated ion channel</keyword>
<keyword id="KW-0472">Membrane</keyword>
<keyword id="KW-0479">Metal-binding</keyword>
<keyword id="KW-0597">Phosphoprotein</keyword>
<keyword id="KW-0628">Postsynaptic cell membrane</keyword>
<keyword id="KW-0675">Receptor</keyword>
<keyword id="KW-1185">Reference proteome</keyword>
<keyword id="KW-0732">Signal</keyword>
<keyword id="KW-0770">Synapse</keyword>
<keyword id="KW-0812">Transmembrane</keyword>
<keyword id="KW-1133">Transmembrane helix</keyword>
<keyword id="KW-0813">Transport</keyword>
<keyword id="KW-0862">Zinc</keyword>
<comment type="function">
    <text evidence="4 6 9 10 11">Glycine receptors are ligand-gated chloride channels. Channel opening is triggered by extracellular glycine (PubMed:15131310, PubMed:23613537, PubMed:23834509, PubMed:23895467). Channel characteristics depend on the subunit composition; heteropentameric channels display faster channel closure (PubMed:25445488). Plays an important role in the down-regulation of neuronal excitability (By similarity). Contributes to the generation of inhibitory postsynaptic currents (PubMed:25445488). Contributes to increased pain perception in response to increased prostaglandin E2 levels (By similarity). Plays a role in cellular responses to ethanol (PubMed:23895467).</text>
</comment>
<comment type="catalytic activity">
    <reaction evidence="6 8 9 10 11">
        <text>chloride(in) = chloride(out)</text>
        <dbReference type="Rhea" id="RHEA:29823"/>
        <dbReference type="ChEBI" id="CHEBI:17996"/>
    </reaction>
</comment>
<comment type="activity regulation">
    <text evidence="6 9 10">Low levels of Zn(2+) ions (1 uM) increase glycine sensitivity and decrease the glycine concentration required for half-maximal channel activity (PubMed:23895467). Channel activity is strongly enhanced by ethanol (PubMed:23895467). Inhibited by picrotoxin (PubMed:23834509). Inhibited by prostaglandin E2, probably via PKA-mediated phosphorylation at Ser-379 (PubMed:15131310).</text>
</comment>
<comment type="biophysicochemical properties">
    <kinetics>
        <text evidence="10">A concentration of about 900 uM glycine results in half-maximal channel conductance in the absence of Zn(2+). In the presence of 1 uM Zn(2+), 400uM glycine results in half-maximal channel conductance.</text>
    </kinetics>
</comment>
<comment type="subunit">
    <text evidence="1 11">Homopentamer (in vitro) (By similarity). Heteropentamer composed of GLRA3 and GLRB. Both homopentamers and heteropentamers form functional ion channels, but their characteristics are subtly different (PubMed:25445488).</text>
</comment>
<comment type="subcellular location">
    <subcellularLocation>
        <location evidence="14">Postsynaptic cell membrane</location>
        <topology evidence="2">Multi-pass membrane protein</topology>
    </subcellularLocation>
    <subcellularLocation>
        <location evidence="7">Perikaryon</location>
    </subcellularLocation>
    <subcellularLocation>
        <location evidence="7">Cell projection</location>
        <location evidence="7">Dendrite</location>
    </subcellularLocation>
    <subcellularLocation>
        <location evidence="7">Synapse</location>
    </subcellularLocation>
    <subcellularLocation>
        <location evidence="6 7 8 9 10 11">Cell membrane</location>
        <topology evidence="2">Multi-pass membrane protein</topology>
    </subcellularLocation>
    <text evidence="7">Partially colocalizes with GPHN that is known to mediate receptor clustering at postsynaptic membranes.</text>
</comment>
<comment type="domain">
    <text evidence="2">The N-terminal domain carries structural determinants essential for agonist and antagonist binding. The channel pore is formed by pentameric assembly of the second transmembrane domain from all five subunits. The cytoplasmic loop is an important determinant of channel inactivation kinetics.</text>
</comment>
<comment type="PTM">
    <text evidence="13 15">Phosphorylated by PKA; this causes down-regulation of channel activity (Probable).</text>
</comment>
<comment type="miscellaneous">
    <text evidence="2">The alpha subunit binds strychnine.</text>
</comment>
<comment type="similarity">
    <text evidence="12">Belongs to the ligand-gated ion channel (TC 1.A.9) family. Glycine receptor (TC 1.A.9.3) subfamily. GLRA3 sub-subfamily.</text>
</comment>
<gene>
    <name type="primary">Glra3</name>
</gene>
<protein>
    <recommendedName>
        <fullName>Glycine receptor subunit alpha-3</fullName>
    </recommendedName>
</protein>
<proteinExistence type="evidence at protein level"/>